<reference key="1">
    <citation type="journal article" date="2005" name="Science">
        <title>The transcriptional landscape of the mammalian genome.</title>
        <authorList>
            <person name="Carninci P."/>
            <person name="Kasukawa T."/>
            <person name="Katayama S."/>
            <person name="Gough J."/>
            <person name="Frith M.C."/>
            <person name="Maeda N."/>
            <person name="Oyama R."/>
            <person name="Ravasi T."/>
            <person name="Lenhard B."/>
            <person name="Wells C."/>
            <person name="Kodzius R."/>
            <person name="Shimokawa K."/>
            <person name="Bajic V.B."/>
            <person name="Brenner S.E."/>
            <person name="Batalov S."/>
            <person name="Forrest A.R."/>
            <person name="Zavolan M."/>
            <person name="Davis M.J."/>
            <person name="Wilming L.G."/>
            <person name="Aidinis V."/>
            <person name="Allen J.E."/>
            <person name="Ambesi-Impiombato A."/>
            <person name="Apweiler R."/>
            <person name="Aturaliya R.N."/>
            <person name="Bailey T.L."/>
            <person name="Bansal M."/>
            <person name="Baxter L."/>
            <person name="Beisel K.W."/>
            <person name="Bersano T."/>
            <person name="Bono H."/>
            <person name="Chalk A.M."/>
            <person name="Chiu K.P."/>
            <person name="Choudhary V."/>
            <person name="Christoffels A."/>
            <person name="Clutterbuck D.R."/>
            <person name="Crowe M.L."/>
            <person name="Dalla E."/>
            <person name="Dalrymple B.P."/>
            <person name="de Bono B."/>
            <person name="Della Gatta G."/>
            <person name="di Bernardo D."/>
            <person name="Down T."/>
            <person name="Engstrom P."/>
            <person name="Fagiolini M."/>
            <person name="Faulkner G."/>
            <person name="Fletcher C.F."/>
            <person name="Fukushima T."/>
            <person name="Furuno M."/>
            <person name="Futaki S."/>
            <person name="Gariboldi M."/>
            <person name="Georgii-Hemming P."/>
            <person name="Gingeras T.R."/>
            <person name="Gojobori T."/>
            <person name="Green R.E."/>
            <person name="Gustincich S."/>
            <person name="Harbers M."/>
            <person name="Hayashi Y."/>
            <person name="Hensch T.K."/>
            <person name="Hirokawa N."/>
            <person name="Hill D."/>
            <person name="Huminiecki L."/>
            <person name="Iacono M."/>
            <person name="Ikeo K."/>
            <person name="Iwama A."/>
            <person name="Ishikawa T."/>
            <person name="Jakt M."/>
            <person name="Kanapin A."/>
            <person name="Katoh M."/>
            <person name="Kawasawa Y."/>
            <person name="Kelso J."/>
            <person name="Kitamura H."/>
            <person name="Kitano H."/>
            <person name="Kollias G."/>
            <person name="Krishnan S.P."/>
            <person name="Kruger A."/>
            <person name="Kummerfeld S.K."/>
            <person name="Kurochkin I.V."/>
            <person name="Lareau L.F."/>
            <person name="Lazarevic D."/>
            <person name="Lipovich L."/>
            <person name="Liu J."/>
            <person name="Liuni S."/>
            <person name="McWilliam S."/>
            <person name="Madan Babu M."/>
            <person name="Madera M."/>
            <person name="Marchionni L."/>
            <person name="Matsuda H."/>
            <person name="Matsuzawa S."/>
            <person name="Miki H."/>
            <person name="Mignone F."/>
            <person name="Miyake S."/>
            <person name="Morris K."/>
            <person name="Mottagui-Tabar S."/>
            <person name="Mulder N."/>
            <person name="Nakano N."/>
            <person name="Nakauchi H."/>
            <person name="Ng P."/>
            <person name="Nilsson R."/>
            <person name="Nishiguchi S."/>
            <person name="Nishikawa S."/>
            <person name="Nori F."/>
            <person name="Ohara O."/>
            <person name="Okazaki Y."/>
            <person name="Orlando V."/>
            <person name="Pang K.C."/>
            <person name="Pavan W.J."/>
            <person name="Pavesi G."/>
            <person name="Pesole G."/>
            <person name="Petrovsky N."/>
            <person name="Piazza S."/>
            <person name="Reed J."/>
            <person name="Reid J.F."/>
            <person name="Ring B.Z."/>
            <person name="Ringwald M."/>
            <person name="Rost B."/>
            <person name="Ruan Y."/>
            <person name="Salzberg S.L."/>
            <person name="Sandelin A."/>
            <person name="Schneider C."/>
            <person name="Schoenbach C."/>
            <person name="Sekiguchi K."/>
            <person name="Semple C.A."/>
            <person name="Seno S."/>
            <person name="Sessa L."/>
            <person name="Sheng Y."/>
            <person name="Shibata Y."/>
            <person name="Shimada H."/>
            <person name="Shimada K."/>
            <person name="Silva D."/>
            <person name="Sinclair B."/>
            <person name="Sperling S."/>
            <person name="Stupka E."/>
            <person name="Sugiura K."/>
            <person name="Sultana R."/>
            <person name="Takenaka Y."/>
            <person name="Taki K."/>
            <person name="Tammoja K."/>
            <person name="Tan S.L."/>
            <person name="Tang S."/>
            <person name="Taylor M.S."/>
            <person name="Tegner J."/>
            <person name="Teichmann S.A."/>
            <person name="Ueda H.R."/>
            <person name="van Nimwegen E."/>
            <person name="Verardo R."/>
            <person name="Wei C.L."/>
            <person name="Yagi K."/>
            <person name="Yamanishi H."/>
            <person name="Zabarovsky E."/>
            <person name="Zhu S."/>
            <person name="Zimmer A."/>
            <person name="Hide W."/>
            <person name="Bult C."/>
            <person name="Grimmond S.M."/>
            <person name="Teasdale R.D."/>
            <person name="Liu E.T."/>
            <person name="Brusic V."/>
            <person name="Quackenbush J."/>
            <person name="Wahlestedt C."/>
            <person name="Mattick J.S."/>
            <person name="Hume D.A."/>
            <person name="Kai C."/>
            <person name="Sasaki D."/>
            <person name="Tomaru Y."/>
            <person name="Fukuda S."/>
            <person name="Kanamori-Katayama M."/>
            <person name="Suzuki M."/>
            <person name="Aoki J."/>
            <person name="Arakawa T."/>
            <person name="Iida J."/>
            <person name="Imamura K."/>
            <person name="Itoh M."/>
            <person name="Kato T."/>
            <person name="Kawaji H."/>
            <person name="Kawagashira N."/>
            <person name="Kawashima T."/>
            <person name="Kojima M."/>
            <person name="Kondo S."/>
            <person name="Konno H."/>
            <person name="Nakano K."/>
            <person name="Ninomiya N."/>
            <person name="Nishio T."/>
            <person name="Okada M."/>
            <person name="Plessy C."/>
            <person name="Shibata K."/>
            <person name="Shiraki T."/>
            <person name="Suzuki S."/>
            <person name="Tagami M."/>
            <person name="Waki K."/>
            <person name="Watahiki A."/>
            <person name="Okamura-Oho Y."/>
            <person name="Suzuki H."/>
            <person name="Kawai J."/>
            <person name="Hayashizaki Y."/>
        </authorList>
    </citation>
    <scope>NUCLEOTIDE SEQUENCE [LARGE SCALE MRNA]</scope>
    <source>
        <strain>C57BL/6J</strain>
        <tissue>Diencephalon</tissue>
        <tissue>Liver</tissue>
    </source>
</reference>
<reference key="2">
    <citation type="journal article" date="2004" name="Genome Res.">
        <title>The status, quality, and expansion of the NIH full-length cDNA project: the Mammalian Gene Collection (MGC).</title>
        <authorList>
            <consortium name="The MGC Project Team"/>
        </authorList>
    </citation>
    <scope>NUCLEOTIDE SEQUENCE [LARGE SCALE MRNA]</scope>
    <source>
        <strain>C57BL/6J</strain>
        <tissue>Eye</tissue>
    </source>
</reference>
<reference key="3">
    <citation type="journal article" date="2010" name="Cell">
        <title>A tissue-specific atlas of mouse protein phosphorylation and expression.</title>
        <authorList>
            <person name="Huttlin E.L."/>
            <person name="Jedrychowski M.P."/>
            <person name="Elias J.E."/>
            <person name="Goswami T."/>
            <person name="Rad R."/>
            <person name="Beausoleil S.A."/>
            <person name="Villen J."/>
            <person name="Haas W."/>
            <person name="Sowa M.E."/>
            <person name="Gygi S.P."/>
        </authorList>
    </citation>
    <scope>IDENTIFICATION BY MASS SPECTROMETRY [LARGE SCALE ANALYSIS]</scope>
    <source>
        <tissue>Brain</tissue>
        <tissue>Heart</tissue>
        <tissue>Kidney</tissue>
        <tissue>Testis</tissue>
    </source>
</reference>
<protein>
    <recommendedName>
        <fullName>Retinol dehydrogenase 13</fullName>
        <ecNumber evidence="2">1.1.1.300</ecNumber>
    </recommendedName>
</protein>
<gene>
    <name type="primary">Rdh13</name>
</gene>
<accession>Q8CEE7</accession>
<accession>Q8CC07</accession>
<comment type="function">
    <text evidence="2">Retinol dehydrogenase with a clear preference for NADP. Oxidizes all-trans-retinol, but seems to reduce all-trans-retinal with much higher efficiency. Has no activity towards steroid.</text>
</comment>
<comment type="catalytic activity">
    <reaction evidence="2">
        <text>all-trans-retinol + NADP(+) = all-trans-retinal + NADPH + H(+)</text>
        <dbReference type="Rhea" id="RHEA:25033"/>
        <dbReference type="ChEBI" id="CHEBI:15378"/>
        <dbReference type="ChEBI" id="CHEBI:17336"/>
        <dbReference type="ChEBI" id="CHEBI:17898"/>
        <dbReference type="ChEBI" id="CHEBI:57783"/>
        <dbReference type="ChEBI" id="CHEBI:58349"/>
        <dbReference type="EC" id="1.1.1.300"/>
    </reaction>
</comment>
<comment type="pathway">
    <text evidence="4">Cofactor metabolism; retinol metabolism.</text>
</comment>
<comment type="subcellular location">
    <subcellularLocation>
        <location evidence="2">Mitochondrion inner membrane</location>
        <topology evidence="2">Peripheral membrane protein</topology>
    </subcellularLocation>
    <text evidence="2">Localized on the outer side of the inner mitochondrial membrane.</text>
</comment>
<comment type="similarity">
    <text evidence="6">Belongs to the short-chain dehydrogenases/reductases (SDR) family.</text>
</comment>
<dbReference type="EC" id="1.1.1.300" evidence="2"/>
<dbReference type="EMBL" id="AK028434">
    <property type="protein sequence ID" value="BAC25950.1"/>
    <property type="molecule type" value="mRNA"/>
</dbReference>
<dbReference type="EMBL" id="AK034180">
    <property type="protein sequence ID" value="BAC28618.1"/>
    <property type="molecule type" value="mRNA"/>
</dbReference>
<dbReference type="EMBL" id="BC082583">
    <property type="protein sequence ID" value="AAH82583.1"/>
    <property type="molecule type" value="mRNA"/>
</dbReference>
<dbReference type="CCDS" id="CCDS20735.1"/>
<dbReference type="RefSeq" id="NP_001277338.1">
    <property type="nucleotide sequence ID" value="NM_001290409.1"/>
</dbReference>
<dbReference type="RefSeq" id="NP_001277340.1">
    <property type="nucleotide sequence ID" value="NM_001290411.1"/>
</dbReference>
<dbReference type="RefSeq" id="NP_780581.1">
    <property type="nucleotide sequence ID" value="NM_175372.4"/>
</dbReference>
<dbReference type="RefSeq" id="XP_036008457.1">
    <property type="nucleotide sequence ID" value="XM_036152564.1"/>
</dbReference>
<dbReference type="SMR" id="Q8CEE7"/>
<dbReference type="BioGRID" id="224445">
    <property type="interactions" value="6"/>
</dbReference>
<dbReference type="FunCoup" id="Q8CEE7">
    <property type="interactions" value="1186"/>
</dbReference>
<dbReference type="IntAct" id="Q8CEE7">
    <property type="interactions" value="1"/>
</dbReference>
<dbReference type="STRING" id="10090.ENSMUSP00000008579"/>
<dbReference type="iPTMnet" id="Q8CEE7"/>
<dbReference type="PhosphoSitePlus" id="Q8CEE7"/>
<dbReference type="SwissPalm" id="Q8CEE7"/>
<dbReference type="jPOST" id="Q8CEE7"/>
<dbReference type="PaxDb" id="10090-ENSMUSP00000008579"/>
<dbReference type="PeptideAtlas" id="Q8CEE7"/>
<dbReference type="ProteomicsDB" id="253190"/>
<dbReference type="Pumba" id="Q8CEE7"/>
<dbReference type="Antibodypedia" id="32994">
    <property type="antibodies" value="135 antibodies from 20 providers"/>
</dbReference>
<dbReference type="DNASU" id="108841"/>
<dbReference type="Ensembl" id="ENSMUST00000008579.14">
    <property type="protein sequence ID" value="ENSMUSP00000008579.8"/>
    <property type="gene ID" value="ENSMUSG00000008435.16"/>
</dbReference>
<dbReference type="GeneID" id="108841"/>
<dbReference type="KEGG" id="mmu:108841"/>
<dbReference type="UCSC" id="uc009exm.2">
    <property type="organism name" value="mouse"/>
</dbReference>
<dbReference type="AGR" id="MGI:1918732"/>
<dbReference type="CTD" id="112724"/>
<dbReference type="MGI" id="MGI:1918732">
    <property type="gene designation" value="Rdh13"/>
</dbReference>
<dbReference type="VEuPathDB" id="HostDB:ENSMUSG00000008435"/>
<dbReference type="eggNOG" id="KOG1208">
    <property type="taxonomic scope" value="Eukaryota"/>
</dbReference>
<dbReference type="GeneTree" id="ENSGT00940000159641"/>
<dbReference type="HOGENOM" id="CLU_010194_44_5_1"/>
<dbReference type="InParanoid" id="Q8CEE7"/>
<dbReference type="OMA" id="LMCATEP"/>
<dbReference type="OrthoDB" id="191139at2759"/>
<dbReference type="PhylomeDB" id="Q8CEE7"/>
<dbReference type="TreeFam" id="TF105429"/>
<dbReference type="Reactome" id="R-MMU-5365859">
    <property type="pathway name" value="RA biosynthesis pathway"/>
</dbReference>
<dbReference type="UniPathway" id="UPA00912"/>
<dbReference type="BioGRID-ORCS" id="108841">
    <property type="hits" value="4 hits in 81 CRISPR screens"/>
</dbReference>
<dbReference type="PRO" id="PR:Q8CEE7"/>
<dbReference type="Proteomes" id="UP000000589">
    <property type="component" value="Chromosome 7"/>
</dbReference>
<dbReference type="RNAct" id="Q8CEE7">
    <property type="molecule type" value="protein"/>
</dbReference>
<dbReference type="Bgee" id="ENSMUSG00000008435">
    <property type="expression patterns" value="Expressed in ear vesicle and 256 other cell types or tissues"/>
</dbReference>
<dbReference type="ExpressionAtlas" id="Q8CEE7">
    <property type="expression patterns" value="baseline and differential"/>
</dbReference>
<dbReference type="GO" id="GO:0005743">
    <property type="term" value="C:mitochondrial inner membrane"/>
    <property type="evidence" value="ECO:0000250"/>
    <property type="project" value="UniProtKB"/>
</dbReference>
<dbReference type="GO" id="GO:0005739">
    <property type="term" value="C:mitochondrion"/>
    <property type="evidence" value="ECO:0007005"/>
    <property type="project" value="MGI"/>
</dbReference>
<dbReference type="GO" id="GO:0052650">
    <property type="term" value="F:all-trans-retinol dehydrogenase (NADP+) activity"/>
    <property type="evidence" value="ECO:0000250"/>
    <property type="project" value="UniProtKB"/>
</dbReference>
<dbReference type="GO" id="GO:0042462">
    <property type="term" value="P:eye photoreceptor cell development"/>
    <property type="evidence" value="ECO:0000315"/>
    <property type="project" value="MGI"/>
</dbReference>
<dbReference type="GO" id="GO:0009644">
    <property type="term" value="P:response to high light intensity"/>
    <property type="evidence" value="ECO:0000315"/>
    <property type="project" value="MGI"/>
</dbReference>
<dbReference type="GO" id="GO:0010842">
    <property type="term" value="P:retina layer formation"/>
    <property type="evidence" value="ECO:0000315"/>
    <property type="project" value="MGI"/>
</dbReference>
<dbReference type="GO" id="GO:0042574">
    <property type="term" value="P:retinal metabolic process"/>
    <property type="evidence" value="ECO:0000250"/>
    <property type="project" value="UniProtKB"/>
</dbReference>
<dbReference type="FunFam" id="3.40.50.720:FF:000145">
    <property type="entry name" value="Retinol dehydrogenase 12"/>
    <property type="match status" value="1"/>
</dbReference>
<dbReference type="Gene3D" id="3.40.50.720">
    <property type="entry name" value="NAD(P)-binding Rossmann-like Domain"/>
    <property type="match status" value="1"/>
</dbReference>
<dbReference type="InterPro" id="IPR036291">
    <property type="entry name" value="NAD(P)-bd_dom_sf"/>
</dbReference>
<dbReference type="InterPro" id="IPR020904">
    <property type="entry name" value="Sc_DH/Rdtase_CS"/>
</dbReference>
<dbReference type="InterPro" id="IPR002347">
    <property type="entry name" value="SDR_fam"/>
</dbReference>
<dbReference type="PANTHER" id="PTHR43157">
    <property type="entry name" value="PHOSPHATIDYLINOSITOL-GLYCAN BIOSYNTHESIS CLASS F PROTEIN-RELATED"/>
    <property type="match status" value="1"/>
</dbReference>
<dbReference type="PANTHER" id="PTHR43157:SF59">
    <property type="entry name" value="RETINOL DEHYDROGENASE 13"/>
    <property type="match status" value="1"/>
</dbReference>
<dbReference type="Pfam" id="PF00106">
    <property type="entry name" value="adh_short"/>
    <property type="match status" value="1"/>
</dbReference>
<dbReference type="PRINTS" id="PR00081">
    <property type="entry name" value="GDHRDH"/>
</dbReference>
<dbReference type="PRINTS" id="PR00080">
    <property type="entry name" value="SDRFAMILY"/>
</dbReference>
<dbReference type="SUPFAM" id="SSF51735">
    <property type="entry name" value="NAD(P)-binding Rossmann-fold domains"/>
    <property type="match status" value="1"/>
</dbReference>
<dbReference type="PROSITE" id="PS00061">
    <property type="entry name" value="ADH_SHORT"/>
    <property type="match status" value="1"/>
</dbReference>
<evidence type="ECO:0000250" key="1"/>
<evidence type="ECO:0000250" key="2">
    <source>
        <dbReference type="UniProtKB" id="Q8NBN7"/>
    </source>
</evidence>
<evidence type="ECO:0000250" key="3">
    <source>
        <dbReference type="UniProtKB" id="Q8WNV7"/>
    </source>
</evidence>
<evidence type="ECO:0000250" key="4">
    <source>
        <dbReference type="UniProtKB" id="Q9ERI6"/>
    </source>
</evidence>
<evidence type="ECO:0000255" key="5">
    <source>
        <dbReference type="PROSITE-ProRule" id="PRU10001"/>
    </source>
</evidence>
<evidence type="ECO:0000305" key="6"/>
<organism>
    <name type="scientific">Mus musculus</name>
    <name type="common">Mouse</name>
    <dbReference type="NCBI Taxonomy" id="10090"/>
    <lineage>
        <taxon>Eukaryota</taxon>
        <taxon>Metazoa</taxon>
        <taxon>Chordata</taxon>
        <taxon>Craniata</taxon>
        <taxon>Vertebrata</taxon>
        <taxon>Euteleostomi</taxon>
        <taxon>Mammalia</taxon>
        <taxon>Eutheria</taxon>
        <taxon>Euarchontoglires</taxon>
        <taxon>Glires</taxon>
        <taxon>Rodentia</taxon>
        <taxon>Myomorpha</taxon>
        <taxon>Muroidea</taxon>
        <taxon>Muridae</taxon>
        <taxon>Murinae</taxon>
        <taxon>Mus</taxon>
        <taxon>Mus</taxon>
    </lineage>
</organism>
<sequence>MSRFLLPVSVVGTVIGGTVLLKDYVAGGACPSKATIPGKTVIVTGANTGIGKQTALELAKRGGNVILACRDMEKCEVAAKDIRGETLNPRVRAERLDLASLKSIREFARKVIKEEERVDILVNNAAVMRCPHWTTEDGFEMQFGVNYLGHFLLTNLLLDKLKASAPSRIINLSSLAHVAGHIDFEDLNWQMKKYDTKAAYCQSKLAVVLFTKELSHRLQGSGVTVNALHPGVARTELGRHTGMHNSAFSGFMLGPFFWLLFKSPQLAAQPSTYLAVAEELENVSGKYFDGLREKAPSPEAEDEEVARRLWTESARLVGLAMAHGSPGRGHAIPR</sequence>
<proteinExistence type="evidence at protein level"/>
<name>RDH13_MOUSE</name>
<keyword id="KW-0007">Acetylation</keyword>
<keyword id="KW-0443">Lipid metabolism</keyword>
<keyword id="KW-0472">Membrane</keyword>
<keyword id="KW-0496">Mitochondrion</keyword>
<keyword id="KW-0999">Mitochondrion inner membrane</keyword>
<keyword id="KW-0521">NADP</keyword>
<keyword id="KW-0560">Oxidoreductase</keyword>
<keyword id="KW-1185">Reference proteome</keyword>
<feature type="initiator methionine" description="Removed" evidence="2">
    <location>
        <position position="1"/>
    </location>
</feature>
<feature type="chain" id="PRO_0000054769" description="Retinol dehydrogenase 13">
    <location>
        <begin position="2"/>
        <end position="334"/>
    </location>
</feature>
<feature type="active site" description="Proton acceptor" evidence="3 5">
    <location>
        <position position="200"/>
    </location>
</feature>
<feature type="binding site" evidence="1">
    <location>
        <begin position="45"/>
        <end position="51"/>
    </location>
    <ligand>
        <name>NADP(+)</name>
        <dbReference type="ChEBI" id="CHEBI:58349"/>
    </ligand>
</feature>
<feature type="binding site" evidence="1">
    <location>
        <position position="174"/>
    </location>
    <ligand>
        <name>substrate</name>
    </ligand>
</feature>
<feature type="modified residue" description="N-acetylserine" evidence="2">
    <location>
        <position position="2"/>
    </location>
</feature>
<feature type="sequence conflict" description="In Ref. 1; BAC28618." evidence="6" ref="1">
    <location>
        <begin position="114"/>
        <end position="148"/>
    </location>
</feature>